<feature type="chain" id="PRO_0000347633" description="Alanine--tRNA ligase">
    <location>
        <begin position="1"/>
        <end position="847"/>
    </location>
</feature>
<feature type="binding site" evidence="1">
    <location>
        <position position="554"/>
    </location>
    <ligand>
        <name>Zn(2+)</name>
        <dbReference type="ChEBI" id="CHEBI:29105"/>
    </ligand>
</feature>
<feature type="binding site" evidence="1">
    <location>
        <position position="558"/>
    </location>
    <ligand>
        <name>Zn(2+)</name>
        <dbReference type="ChEBI" id="CHEBI:29105"/>
    </ligand>
</feature>
<feature type="binding site" evidence="1">
    <location>
        <position position="656"/>
    </location>
    <ligand>
        <name>Zn(2+)</name>
        <dbReference type="ChEBI" id="CHEBI:29105"/>
    </ligand>
</feature>
<feature type="binding site" evidence="1">
    <location>
        <position position="660"/>
    </location>
    <ligand>
        <name>Zn(2+)</name>
        <dbReference type="ChEBI" id="CHEBI:29105"/>
    </ligand>
</feature>
<evidence type="ECO:0000255" key="1">
    <source>
        <dbReference type="HAMAP-Rule" id="MF_00036"/>
    </source>
</evidence>
<keyword id="KW-0030">Aminoacyl-tRNA synthetase</keyword>
<keyword id="KW-0067">ATP-binding</keyword>
<keyword id="KW-0963">Cytoplasm</keyword>
<keyword id="KW-0436">Ligase</keyword>
<keyword id="KW-0479">Metal-binding</keyword>
<keyword id="KW-0547">Nucleotide-binding</keyword>
<keyword id="KW-0648">Protein biosynthesis</keyword>
<keyword id="KW-0694">RNA-binding</keyword>
<keyword id="KW-0820">tRNA-binding</keyword>
<keyword id="KW-0862">Zinc</keyword>
<comment type="function">
    <text evidence="1">Catalyzes the attachment of alanine to tRNA(Ala) in a two-step reaction: alanine is first activated by ATP to form Ala-AMP and then transferred to the acceptor end of tRNA(Ala). Also edits incorrectly charged Ser-tRNA(Ala) and Gly-tRNA(Ala) via its editing domain.</text>
</comment>
<comment type="catalytic activity">
    <reaction evidence="1">
        <text>tRNA(Ala) + L-alanine + ATP = L-alanyl-tRNA(Ala) + AMP + diphosphate</text>
        <dbReference type="Rhea" id="RHEA:12540"/>
        <dbReference type="Rhea" id="RHEA-COMP:9657"/>
        <dbReference type="Rhea" id="RHEA-COMP:9923"/>
        <dbReference type="ChEBI" id="CHEBI:30616"/>
        <dbReference type="ChEBI" id="CHEBI:33019"/>
        <dbReference type="ChEBI" id="CHEBI:57972"/>
        <dbReference type="ChEBI" id="CHEBI:78442"/>
        <dbReference type="ChEBI" id="CHEBI:78497"/>
        <dbReference type="ChEBI" id="CHEBI:456215"/>
        <dbReference type="EC" id="6.1.1.7"/>
    </reaction>
</comment>
<comment type="cofactor">
    <cofactor evidence="1">
        <name>Zn(2+)</name>
        <dbReference type="ChEBI" id="CHEBI:29105"/>
    </cofactor>
    <text evidence="1">Binds 1 zinc ion per subunit.</text>
</comment>
<comment type="subcellular location">
    <subcellularLocation>
        <location evidence="1">Cytoplasm</location>
    </subcellularLocation>
</comment>
<comment type="domain">
    <text evidence="1">Consists of three domains; the N-terminal catalytic domain, the editing domain and the C-terminal C-Ala domain. The editing domain removes incorrectly charged amino acids, while the C-Ala domain, along with tRNA(Ala), serves as a bridge to cooperatively bring together the editing and aminoacylation centers thus stimulating deacylation of misacylated tRNAs.</text>
</comment>
<comment type="similarity">
    <text evidence="1">Belongs to the class-II aminoacyl-tRNA synthetase family.</text>
</comment>
<dbReference type="EC" id="6.1.1.7" evidence="1"/>
<dbReference type="EMBL" id="CP001072">
    <property type="protein sequence ID" value="ACD48686.1"/>
    <property type="molecule type" value="Genomic_DNA"/>
</dbReference>
<dbReference type="RefSeq" id="WP_000354705.1">
    <property type="nucleotide sequence ID" value="NC_010698.2"/>
</dbReference>
<dbReference type="SMR" id="B2UV04"/>
<dbReference type="KEGG" id="hps:HPSH_06420"/>
<dbReference type="HOGENOM" id="CLU_004485_1_1_7"/>
<dbReference type="GO" id="GO:0005829">
    <property type="term" value="C:cytosol"/>
    <property type="evidence" value="ECO:0007669"/>
    <property type="project" value="TreeGrafter"/>
</dbReference>
<dbReference type="GO" id="GO:0004813">
    <property type="term" value="F:alanine-tRNA ligase activity"/>
    <property type="evidence" value="ECO:0007669"/>
    <property type="project" value="UniProtKB-UniRule"/>
</dbReference>
<dbReference type="GO" id="GO:0002161">
    <property type="term" value="F:aminoacyl-tRNA deacylase activity"/>
    <property type="evidence" value="ECO:0007669"/>
    <property type="project" value="TreeGrafter"/>
</dbReference>
<dbReference type="GO" id="GO:0005524">
    <property type="term" value="F:ATP binding"/>
    <property type="evidence" value="ECO:0007669"/>
    <property type="project" value="UniProtKB-UniRule"/>
</dbReference>
<dbReference type="GO" id="GO:0000049">
    <property type="term" value="F:tRNA binding"/>
    <property type="evidence" value="ECO:0007669"/>
    <property type="project" value="UniProtKB-KW"/>
</dbReference>
<dbReference type="GO" id="GO:0008270">
    <property type="term" value="F:zinc ion binding"/>
    <property type="evidence" value="ECO:0007669"/>
    <property type="project" value="UniProtKB-UniRule"/>
</dbReference>
<dbReference type="GO" id="GO:0006419">
    <property type="term" value="P:alanyl-tRNA aminoacylation"/>
    <property type="evidence" value="ECO:0007669"/>
    <property type="project" value="UniProtKB-UniRule"/>
</dbReference>
<dbReference type="GO" id="GO:0045892">
    <property type="term" value="P:negative regulation of DNA-templated transcription"/>
    <property type="evidence" value="ECO:0007669"/>
    <property type="project" value="TreeGrafter"/>
</dbReference>
<dbReference type="CDD" id="cd00673">
    <property type="entry name" value="AlaRS_core"/>
    <property type="match status" value="1"/>
</dbReference>
<dbReference type="FunFam" id="3.10.310.40:FF:000001">
    <property type="entry name" value="Alanine--tRNA ligase"/>
    <property type="match status" value="1"/>
</dbReference>
<dbReference type="FunFam" id="3.30.54.20:FF:000001">
    <property type="entry name" value="Alanine--tRNA ligase"/>
    <property type="match status" value="1"/>
</dbReference>
<dbReference type="FunFam" id="3.30.930.10:FF:000004">
    <property type="entry name" value="Alanine--tRNA ligase"/>
    <property type="match status" value="1"/>
</dbReference>
<dbReference type="FunFam" id="3.30.980.10:FF:000004">
    <property type="entry name" value="Alanine--tRNA ligase, cytoplasmic"/>
    <property type="match status" value="1"/>
</dbReference>
<dbReference type="Gene3D" id="2.40.30.130">
    <property type="match status" value="1"/>
</dbReference>
<dbReference type="Gene3D" id="3.10.310.40">
    <property type="match status" value="1"/>
</dbReference>
<dbReference type="Gene3D" id="3.30.54.20">
    <property type="match status" value="1"/>
</dbReference>
<dbReference type="Gene3D" id="3.30.930.10">
    <property type="entry name" value="Bira Bifunctional Protein, Domain 2"/>
    <property type="match status" value="1"/>
</dbReference>
<dbReference type="Gene3D" id="3.30.980.10">
    <property type="entry name" value="Threonyl-trna Synthetase, Chain A, domain 2"/>
    <property type="match status" value="1"/>
</dbReference>
<dbReference type="HAMAP" id="MF_00036_B">
    <property type="entry name" value="Ala_tRNA_synth_B"/>
    <property type="match status" value="1"/>
</dbReference>
<dbReference type="InterPro" id="IPR045864">
    <property type="entry name" value="aa-tRNA-synth_II/BPL/LPL"/>
</dbReference>
<dbReference type="InterPro" id="IPR002318">
    <property type="entry name" value="Ala-tRNA-lgiase_IIc"/>
</dbReference>
<dbReference type="InterPro" id="IPR018162">
    <property type="entry name" value="Ala-tRNA-ligase_IIc_anticod-bd"/>
</dbReference>
<dbReference type="InterPro" id="IPR018165">
    <property type="entry name" value="Ala-tRNA-synth_IIc_core"/>
</dbReference>
<dbReference type="InterPro" id="IPR018164">
    <property type="entry name" value="Ala-tRNA-synth_IIc_N"/>
</dbReference>
<dbReference type="InterPro" id="IPR050058">
    <property type="entry name" value="Ala-tRNA_ligase"/>
</dbReference>
<dbReference type="InterPro" id="IPR023033">
    <property type="entry name" value="Ala_tRNA_ligase_euk/bac"/>
</dbReference>
<dbReference type="InterPro" id="IPR003156">
    <property type="entry name" value="DHHA1_dom"/>
</dbReference>
<dbReference type="InterPro" id="IPR018163">
    <property type="entry name" value="Thr/Ala-tRNA-synth_IIc_edit"/>
</dbReference>
<dbReference type="InterPro" id="IPR009000">
    <property type="entry name" value="Transl_B-barrel_sf"/>
</dbReference>
<dbReference type="InterPro" id="IPR012947">
    <property type="entry name" value="tRNA_SAD"/>
</dbReference>
<dbReference type="NCBIfam" id="TIGR00344">
    <property type="entry name" value="alaS"/>
    <property type="match status" value="1"/>
</dbReference>
<dbReference type="PANTHER" id="PTHR11777:SF9">
    <property type="entry name" value="ALANINE--TRNA LIGASE, CYTOPLASMIC"/>
    <property type="match status" value="1"/>
</dbReference>
<dbReference type="PANTHER" id="PTHR11777">
    <property type="entry name" value="ALANYL-TRNA SYNTHETASE"/>
    <property type="match status" value="1"/>
</dbReference>
<dbReference type="Pfam" id="PF02272">
    <property type="entry name" value="DHHA1"/>
    <property type="match status" value="1"/>
</dbReference>
<dbReference type="Pfam" id="PF01411">
    <property type="entry name" value="tRNA-synt_2c"/>
    <property type="match status" value="1"/>
</dbReference>
<dbReference type="Pfam" id="PF07973">
    <property type="entry name" value="tRNA_SAD"/>
    <property type="match status" value="1"/>
</dbReference>
<dbReference type="PRINTS" id="PR00980">
    <property type="entry name" value="TRNASYNTHALA"/>
</dbReference>
<dbReference type="SMART" id="SM00863">
    <property type="entry name" value="tRNA_SAD"/>
    <property type="match status" value="1"/>
</dbReference>
<dbReference type="SUPFAM" id="SSF55681">
    <property type="entry name" value="Class II aaRS and biotin synthetases"/>
    <property type="match status" value="1"/>
</dbReference>
<dbReference type="SUPFAM" id="SSF101353">
    <property type="entry name" value="Putative anticodon-binding domain of alanyl-tRNA synthetase (AlaRS)"/>
    <property type="match status" value="1"/>
</dbReference>
<dbReference type="SUPFAM" id="SSF55186">
    <property type="entry name" value="ThrRS/AlaRS common domain"/>
    <property type="match status" value="1"/>
</dbReference>
<dbReference type="SUPFAM" id="SSF50447">
    <property type="entry name" value="Translation proteins"/>
    <property type="match status" value="1"/>
</dbReference>
<dbReference type="PROSITE" id="PS50860">
    <property type="entry name" value="AA_TRNA_LIGASE_II_ALA"/>
    <property type="match status" value="1"/>
</dbReference>
<organism>
    <name type="scientific">Helicobacter pylori (strain Shi470)</name>
    <dbReference type="NCBI Taxonomy" id="512562"/>
    <lineage>
        <taxon>Bacteria</taxon>
        <taxon>Pseudomonadati</taxon>
        <taxon>Campylobacterota</taxon>
        <taxon>Epsilonproteobacteria</taxon>
        <taxon>Campylobacterales</taxon>
        <taxon>Helicobacteraceae</taxon>
        <taxon>Helicobacter</taxon>
    </lineage>
</organism>
<name>SYA_HELPS</name>
<accession>B2UV04</accession>
<protein>
    <recommendedName>
        <fullName evidence="1">Alanine--tRNA ligase</fullName>
        <ecNumber evidence="1">6.1.1.7</ecNumber>
    </recommendedName>
    <alternativeName>
        <fullName evidence="1">Alanyl-tRNA synthetase</fullName>
        <shortName evidence="1">AlaRS</shortName>
    </alternativeName>
</protein>
<gene>
    <name evidence="1" type="primary">alaS</name>
    <name type="ordered locus">HPSH_06420</name>
</gene>
<reference key="1">
    <citation type="submission" date="2008-05" db="EMBL/GenBank/DDBJ databases">
        <title>Genome sequence of Helicobacter pylori from the remote Amazon: traces of Asian ancestry of the first Americans.</title>
        <authorList>
            <person name="Kersulyte D."/>
            <person name="Kalia A."/>
            <person name="Gilman R.H."/>
            <person name="Berg D.E."/>
        </authorList>
    </citation>
    <scope>NUCLEOTIDE SEQUENCE [LARGE SCALE GENOMIC DNA]</scope>
    <source>
        <strain>Shi470</strain>
    </source>
</reference>
<proteinExistence type="inferred from homology"/>
<sequence>MDIRNEFLQFFHNKGHAVYPSMPLVPNDATLLFTNAGMVQFKDIFTGIVPRPSIPRATSSQLCMRAGGKHNDLENVGYTARHHTLFEMLGNFSFGDYFKEEAILFAWEFVTKNLGFKSKDLYISVHEKDDEAVKLWEKFVPFERIKKMGDKDNFWQMGDSGPCGPCSEIYIDQGEKHFKGSEDYFGGEGDRFLEIWNLVFMQYERSNDGVLSPLPKPSIDTGMGLERVQALLEHKLNNFDSSLFAPLMEEISDLASLDYASEFQPSFRVVADHARAVAFLLAQGVHFNKEGRGYVLRRILRRALRHGYLMGLKEAFLYKVVGVVCEQFSNTHAYLKESKEMVMKECFEEEERFLETLESGMELFNLSLEHLNENKIFDGKIAFKLYDTFGFPLDLTNDMLRSHGACVDMQGFESCMQEQVKRSKASWKGKQNNADFSAILNAYAPNVFVGYETTECCAKVLGFFDSDFKEITDAKPNQEVWVLLEKTPFYAEGGGAIGDRGALLKDDEEAAIVLDTKNFFGLNFSLLEIKKALKKGDQVIAQVSDERLEIAKHHSATHLLQSALREVLGSHVSQAGSLVESKRLRFDFSHPKALNDEELEKVEDLVNAQIFKHLNSQVEHMPLNQAKDKGALALFSEKYAENVRVVSFKEASIELCGGIHVENTGLIGGFRIVKESGVSSGVRRIEAVCGKAFYQLAKEENKELKNAKIALKNNDVIAGINKLKESVKNSQKAPVSVELPVEKIHGVNLVVGVVEQGDIKEMIDRLKSKHERLLAMVFKKENERITLACGVKNAPIKANVWANEVAQILGGKGGGRGDFASAGGRDIENLQAALNLAKNTALKALEG</sequence>